<dbReference type="EC" id="7.2.2.7" evidence="1"/>
<dbReference type="EMBL" id="CR378676">
    <property type="protein sequence ID" value="CAG22246.1"/>
    <property type="status" value="ALT_INIT"/>
    <property type="molecule type" value="Genomic_DNA"/>
</dbReference>
<dbReference type="RefSeq" id="WP_011220457.1">
    <property type="nucleotide sequence ID" value="NC_006371.1"/>
</dbReference>
<dbReference type="SMR" id="Q6LKD4"/>
<dbReference type="STRING" id="298386.PBPRB0373"/>
<dbReference type="KEGG" id="ppr:PBPRB0373"/>
<dbReference type="eggNOG" id="COG3842">
    <property type="taxonomic scope" value="Bacteria"/>
</dbReference>
<dbReference type="HOGENOM" id="CLU_000604_1_1_6"/>
<dbReference type="Proteomes" id="UP000000593">
    <property type="component" value="Chromosome 2"/>
</dbReference>
<dbReference type="GO" id="GO:0043190">
    <property type="term" value="C:ATP-binding cassette (ABC) transporter complex"/>
    <property type="evidence" value="ECO:0007669"/>
    <property type="project" value="InterPro"/>
</dbReference>
<dbReference type="GO" id="GO:0015408">
    <property type="term" value="F:ABC-type ferric iron transporter activity"/>
    <property type="evidence" value="ECO:0007669"/>
    <property type="project" value="UniProtKB-EC"/>
</dbReference>
<dbReference type="GO" id="GO:0005524">
    <property type="term" value="F:ATP binding"/>
    <property type="evidence" value="ECO:0007669"/>
    <property type="project" value="UniProtKB-KW"/>
</dbReference>
<dbReference type="GO" id="GO:0016887">
    <property type="term" value="F:ATP hydrolysis activity"/>
    <property type="evidence" value="ECO:0007669"/>
    <property type="project" value="InterPro"/>
</dbReference>
<dbReference type="FunFam" id="3.40.50.300:FF:002767">
    <property type="entry name" value="Fe(3+) ions import ATP-binding protein FbpC"/>
    <property type="match status" value="1"/>
</dbReference>
<dbReference type="Gene3D" id="2.40.50.100">
    <property type="match status" value="1"/>
</dbReference>
<dbReference type="Gene3D" id="3.40.50.300">
    <property type="entry name" value="P-loop containing nucleotide triphosphate hydrolases"/>
    <property type="match status" value="1"/>
</dbReference>
<dbReference type="InterPro" id="IPR003593">
    <property type="entry name" value="AAA+_ATPase"/>
</dbReference>
<dbReference type="InterPro" id="IPR050093">
    <property type="entry name" value="ABC_SmlMolc_Importer"/>
</dbReference>
<dbReference type="InterPro" id="IPR003439">
    <property type="entry name" value="ABC_transporter-like_ATP-bd"/>
</dbReference>
<dbReference type="InterPro" id="IPR017871">
    <property type="entry name" value="ABC_transporter-like_CS"/>
</dbReference>
<dbReference type="InterPro" id="IPR008995">
    <property type="entry name" value="Mo/tungstate-bd_C_term_dom"/>
</dbReference>
<dbReference type="InterPro" id="IPR027417">
    <property type="entry name" value="P-loop_NTPase"/>
</dbReference>
<dbReference type="InterPro" id="IPR013611">
    <property type="entry name" value="Transp-assoc_OB_typ2"/>
</dbReference>
<dbReference type="NCBIfam" id="NF008513">
    <property type="entry name" value="PRK11432.1"/>
    <property type="match status" value="1"/>
</dbReference>
<dbReference type="PANTHER" id="PTHR42781">
    <property type="entry name" value="SPERMIDINE/PUTRESCINE IMPORT ATP-BINDING PROTEIN POTA"/>
    <property type="match status" value="1"/>
</dbReference>
<dbReference type="PANTHER" id="PTHR42781:SF4">
    <property type="entry name" value="SPERMIDINE_PUTRESCINE IMPORT ATP-BINDING PROTEIN POTA"/>
    <property type="match status" value="1"/>
</dbReference>
<dbReference type="Pfam" id="PF00005">
    <property type="entry name" value="ABC_tran"/>
    <property type="match status" value="1"/>
</dbReference>
<dbReference type="Pfam" id="PF08402">
    <property type="entry name" value="TOBE_2"/>
    <property type="match status" value="1"/>
</dbReference>
<dbReference type="SMART" id="SM00382">
    <property type="entry name" value="AAA"/>
    <property type="match status" value="1"/>
</dbReference>
<dbReference type="SUPFAM" id="SSF50331">
    <property type="entry name" value="MOP-like"/>
    <property type="match status" value="1"/>
</dbReference>
<dbReference type="SUPFAM" id="SSF52540">
    <property type="entry name" value="P-loop containing nucleoside triphosphate hydrolases"/>
    <property type="match status" value="1"/>
</dbReference>
<dbReference type="PROSITE" id="PS00211">
    <property type="entry name" value="ABC_TRANSPORTER_1"/>
    <property type="match status" value="1"/>
</dbReference>
<dbReference type="PROSITE" id="PS50893">
    <property type="entry name" value="ABC_TRANSPORTER_2"/>
    <property type="match status" value="1"/>
</dbReference>
<dbReference type="PROSITE" id="PS51242">
    <property type="entry name" value="FBPC"/>
    <property type="match status" value="1"/>
</dbReference>
<protein>
    <recommendedName>
        <fullName evidence="1">Fe(3+) ions import ATP-binding protein FbpC</fullName>
        <ecNumber evidence="1">7.2.2.7</ecNumber>
    </recommendedName>
</protein>
<sequence>MENDNFVVLKNVCKRFGDNTVINNLDLEIKKGSLVTLLGPSGCGKTTVLRLVAGLEKPTSGQIFIDGEDVTNTSIQQRDICMVFQSYALFPHLSLYDNVGYGLKMLKLPAAEIKQRVDDALKLVDLSGMGDRFVDQISGGQQQRIALARALVLKPKVLLFDEPLSNLDANLRRSMRETIRDLQQRFNITSLYVTHDQTEAFAVSDTVIVMKDGEIMQQGSPDDLYKTPSSMFMANFMGDANIFTGRYDDGQLNINGYCIPADPEVVQGKAEGDYQIGVRPEAILLTSEGEPSQQCIVNNVVYMGSMYEVAVTWHDQELLLQLNSSQFDANLSDHAYLTINPTGIFLLPFDA</sequence>
<gene>
    <name evidence="1" type="primary">fbpC</name>
    <name type="ordered locus">PBPRB0373</name>
</gene>
<proteinExistence type="inferred from homology"/>
<evidence type="ECO:0000255" key="1">
    <source>
        <dbReference type="HAMAP-Rule" id="MF_01706"/>
    </source>
</evidence>
<evidence type="ECO:0000305" key="2"/>
<keyword id="KW-0067">ATP-binding</keyword>
<keyword id="KW-0997">Cell inner membrane</keyword>
<keyword id="KW-1003">Cell membrane</keyword>
<keyword id="KW-0406">Ion transport</keyword>
<keyword id="KW-0408">Iron</keyword>
<keyword id="KW-0410">Iron transport</keyword>
<keyword id="KW-0472">Membrane</keyword>
<keyword id="KW-0547">Nucleotide-binding</keyword>
<keyword id="KW-1185">Reference proteome</keyword>
<keyword id="KW-1278">Translocase</keyword>
<keyword id="KW-0813">Transport</keyword>
<organism>
    <name type="scientific">Photobacterium profundum (strain SS9)</name>
    <dbReference type="NCBI Taxonomy" id="298386"/>
    <lineage>
        <taxon>Bacteria</taxon>
        <taxon>Pseudomonadati</taxon>
        <taxon>Pseudomonadota</taxon>
        <taxon>Gammaproteobacteria</taxon>
        <taxon>Vibrionales</taxon>
        <taxon>Vibrionaceae</taxon>
        <taxon>Photobacterium</taxon>
    </lineage>
</organism>
<name>FBPC_PHOPR</name>
<comment type="function">
    <text evidence="1">Part of the ABC transporter complex FbpABC involved in Fe(3+) ions import. Responsible for energy coupling to the transport system.</text>
</comment>
<comment type="catalytic activity">
    <reaction evidence="1">
        <text>Fe(3+)(out) + ATP + H2O = Fe(3+)(in) + ADP + phosphate + H(+)</text>
        <dbReference type="Rhea" id="RHEA:12332"/>
        <dbReference type="ChEBI" id="CHEBI:15377"/>
        <dbReference type="ChEBI" id="CHEBI:15378"/>
        <dbReference type="ChEBI" id="CHEBI:29034"/>
        <dbReference type="ChEBI" id="CHEBI:30616"/>
        <dbReference type="ChEBI" id="CHEBI:43474"/>
        <dbReference type="ChEBI" id="CHEBI:456216"/>
        <dbReference type="EC" id="7.2.2.7"/>
    </reaction>
</comment>
<comment type="subunit">
    <text evidence="1">The complex is composed of two ATP-binding proteins (FbpC), two transmembrane proteins (FbpB) and a solute-binding protein (FbpA).</text>
</comment>
<comment type="subcellular location">
    <subcellularLocation>
        <location evidence="1">Cell inner membrane</location>
        <topology evidence="1">Peripheral membrane protein</topology>
    </subcellularLocation>
</comment>
<comment type="similarity">
    <text evidence="1">Belongs to the ABC transporter superfamily. Fe(3+) ion importer (TC 3.A.1.10) family.</text>
</comment>
<comment type="sequence caution" evidence="2">
    <conflict type="erroneous initiation">
        <sequence resource="EMBL-CDS" id="CAG22246"/>
    </conflict>
</comment>
<accession>Q6LKD4</accession>
<reference key="1">
    <citation type="journal article" date="2005" name="Science">
        <title>Life at depth: Photobacterium profundum genome sequence and expression analysis.</title>
        <authorList>
            <person name="Vezzi A."/>
            <person name="Campanaro S."/>
            <person name="D'Angelo M."/>
            <person name="Simonato F."/>
            <person name="Vitulo N."/>
            <person name="Lauro F.M."/>
            <person name="Cestaro A."/>
            <person name="Malacrida G."/>
            <person name="Simionati B."/>
            <person name="Cannata N."/>
            <person name="Romualdi C."/>
            <person name="Bartlett D.H."/>
            <person name="Valle G."/>
        </authorList>
    </citation>
    <scope>NUCLEOTIDE SEQUENCE [LARGE SCALE GENOMIC DNA]</scope>
    <source>
        <strain>ATCC BAA-1253 / SS9</strain>
    </source>
</reference>
<feature type="chain" id="PRO_0000092360" description="Fe(3+) ions import ATP-binding protein FbpC">
    <location>
        <begin position="1"/>
        <end position="351"/>
    </location>
</feature>
<feature type="domain" description="ABC transporter" evidence="1">
    <location>
        <begin position="7"/>
        <end position="237"/>
    </location>
</feature>
<feature type="binding site" evidence="1">
    <location>
        <begin position="39"/>
        <end position="46"/>
    </location>
    <ligand>
        <name>ATP</name>
        <dbReference type="ChEBI" id="CHEBI:30616"/>
    </ligand>
</feature>